<protein>
    <recommendedName>
        <fullName>UPF0056 membrane protein PYRAB13050</fullName>
    </recommendedName>
</protein>
<proteinExistence type="inferred from homology"/>
<dbReference type="EMBL" id="AJ248287">
    <property type="protein sequence ID" value="CAB50210.1"/>
    <property type="molecule type" value="Genomic_DNA"/>
</dbReference>
<dbReference type="EMBL" id="HE613800">
    <property type="protein sequence ID" value="CCE70746.1"/>
    <property type="molecule type" value="Genomic_DNA"/>
</dbReference>
<dbReference type="PIR" id="E75039">
    <property type="entry name" value="E75039"/>
</dbReference>
<dbReference type="RefSeq" id="WP_010868420.1">
    <property type="nucleotide sequence ID" value="NC_000868.1"/>
</dbReference>
<dbReference type="STRING" id="272844.PAB0863"/>
<dbReference type="KEGG" id="pab:PAB0863"/>
<dbReference type="PATRIC" id="fig|272844.11.peg.1389"/>
<dbReference type="eggNOG" id="arCOG01997">
    <property type="taxonomic scope" value="Archaea"/>
</dbReference>
<dbReference type="HOGENOM" id="CLU_079909_1_0_2"/>
<dbReference type="OrthoDB" id="10856at2157"/>
<dbReference type="PhylomeDB" id="Q9UZ49"/>
<dbReference type="Proteomes" id="UP000000810">
    <property type="component" value="Chromosome"/>
</dbReference>
<dbReference type="Proteomes" id="UP000009139">
    <property type="component" value="Chromosome"/>
</dbReference>
<dbReference type="GO" id="GO:0005886">
    <property type="term" value="C:plasma membrane"/>
    <property type="evidence" value="ECO:0007669"/>
    <property type="project" value="UniProtKB-SubCell"/>
</dbReference>
<dbReference type="InterPro" id="IPR002771">
    <property type="entry name" value="Multi_antbiot-R_MarC"/>
</dbReference>
<dbReference type="NCBIfam" id="TIGR00427">
    <property type="entry name" value="NAAT family transporter"/>
    <property type="match status" value="1"/>
</dbReference>
<dbReference type="PANTHER" id="PTHR33508">
    <property type="entry name" value="UPF0056 MEMBRANE PROTEIN YHCE"/>
    <property type="match status" value="1"/>
</dbReference>
<dbReference type="PANTHER" id="PTHR33508:SF1">
    <property type="entry name" value="UPF0056 MEMBRANE PROTEIN YHCE"/>
    <property type="match status" value="1"/>
</dbReference>
<dbReference type="Pfam" id="PF01914">
    <property type="entry name" value="MarC"/>
    <property type="match status" value="1"/>
</dbReference>
<sequence>MLEVLKTFAVLYVGLFAITNPVGAVPIFMGVVSHLAPDKRHEVAEKVSITVLVTLLTFALVGKWIFKFFGSSVDAFAIAGGILLFRMGMEMLSGKLSSVKIDEEDVTLEEVAVIPLAIPLISGPGAITTVMLYMTRESPPIVIATIIAIGISVYIILASGNKIIEKLGRVGIKVTTRMMGLILTSMAIQMIINGIKGAFGI</sequence>
<comment type="subcellular location">
    <subcellularLocation>
        <location evidence="2">Cell membrane</location>
        <topology evidence="2">Multi-pass membrane protein</topology>
    </subcellularLocation>
</comment>
<comment type="similarity">
    <text evidence="2">Belongs to the UPF0056 (MarC) family.</text>
</comment>
<organism>
    <name type="scientific">Pyrococcus abyssi (strain GE5 / Orsay)</name>
    <dbReference type="NCBI Taxonomy" id="272844"/>
    <lineage>
        <taxon>Archaea</taxon>
        <taxon>Methanobacteriati</taxon>
        <taxon>Methanobacteriota</taxon>
        <taxon>Thermococci</taxon>
        <taxon>Thermococcales</taxon>
        <taxon>Thermococcaceae</taxon>
        <taxon>Pyrococcus</taxon>
    </lineage>
</organism>
<gene>
    <name type="ordered locus">PYRAB13050</name>
    <name type="ORF">PAB0863</name>
</gene>
<feature type="chain" id="PRO_0000156921" description="UPF0056 membrane protein PYRAB13050">
    <location>
        <begin position="1"/>
        <end position="201"/>
    </location>
</feature>
<feature type="transmembrane region" description="Helical" evidence="1">
    <location>
        <begin position="8"/>
        <end position="28"/>
    </location>
</feature>
<feature type="transmembrane region" description="Helical" evidence="1">
    <location>
        <begin position="49"/>
        <end position="69"/>
    </location>
</feature>
<feature type="transmembrane region" description="Helical" evidence="1">
    <location>
        <begin position="73"/>
        <end position="93"/>
    </location>
</feature>
<feature type="transmembrane region" description="Helical" evidence="1">
    <location>
        <begin position="111"/>
        <end position="131"/>
    </location>
</feature>
<feature type="transmembrane region" description="Helical" evidence="1">
    <location>
        <begin position="140"/>
        <end position="160"/>
    </location>
</feature>
<feature type="transmembrane region" description="Helical" evidence="1">
    <location>
        <begin position="181"/>
        <end position="201"/>
    </location>
</feature>
<accession>Q9UZ49</accession>
<accession>G8ZHA9</accession>
<keyword id="KW-1003">Cell membrane</keyword>
<keyword id="KW-0472">Membrane</keyword>
<keyword id="KW-0812">Transmembrane</keyword>
<keyword id="KW-1133">Transmembrane helix</keyword>
<name>Y1305_PYRAB</name>
<evidence type="ECO:0000255" key="1"/>
<evidence type="ECO:0000305" key="2"/>
<reference key="1">
    <citation type="journal article" date="2003" name="Mol. Microbiol.">
        <title>An integrated analysis of the genome of the hyperthermophilic archaeon Pyrococcus abyssi.</title>
        <authorList>
            <person name="Cohen G.N."/>
            <person name="Barbe V."/>
            <person name="Flament D."/>
            <person name="Galperin M."/>
            <person name="Heilig R."/>
            <person name="Lecompte O."/>
            <person name="Poch O."/>
            <person name="Prieur D."/>
            <person name="Querellou J."/>
            <person name="Ripp R."/>
            <person name="Thierry J.-C."/>
            <person name="Van der Oost J."/>
            <person name="Weissenbach J."/>
            <person name="Zivanovic Y."/>
            <person name="Forterre P."/>
        </authorList>
    </citation>
    <scope>NUCLEOTIDE SEQUENCE [LARGE SCALE GENOMIC DNA]</scope>
    <source>
        <strain>GE5 / Orsay</strain>
    </source>
</reference>
<reference key="2">
    <citation type="journal article" date="2012" name="Curr. Microbiol.">
        <title>Re-annotation of two hyperthermophilic archaea Pyrococcus abyssi GE5 and Pyrococcus furiosus DSM 3638.</title>
        <authorList>
            <person name="Gao J."/>
            <person name="Wang J."/>
        </authorList>
    </citation>
    <scope>GENOME REANNOTATION</scope>
    <source>
        <strain>GE5 / Orsay</strain>
    </source>
</reference>